<organism>
    <name type="scientific">Aspergillus fumigatus (strain ATCC MYA-4609 / CBS 101355 / FGSC A1100 / Af293)</name>
    <name type="common">Neosartorya fumigata</name>
    <dbReference type="NCBI Taxonomy" id="330879"/>
    <lineage>
        <taxon>Eukaryota</taxon>
        <taxon>Fungi</taxon>
        <taxon>Dikarya</taxon>
        <taxon>Ascomycota</taxon>
        <taxon>Pezizomycotina</taxon>
        <taxon>Eurotiomycetes</taxon>
        <taxon>Eurotiomycetidae</taxon>
        <taxon>Eurotiales</taxon>
        <taxon>Aspergillaceae</taxon>
        <taxon>Aspergillus</taxon>
        <taxon>Aspergillus subgen. Fumigati</taxon>
    </lineage>
</organism>
<sequence>MTSPVQWGTFFHQCLLHRIDANEFRNLSKLLLQKCPIAETALLDALLQTRSESRIKWDPLLPLYIDCLCRTGRVRTSTVLTSLLKYSSIHDKPQLSTSEGKDGSKCYTLMTDIRVIQDTMLSVSTGSTPKTNAEAVAIFFAIIDWIHAVASWHNSHFDPGQHSSGIMSSPDVVSLFESLGILLAALSGTGKGLEVLSADSHEGLKVKLGQALSAYLPLCVEVSLPLRNRLDGLQKEFNLYGERVPKSLDVPMMENMNVNALQFEASVMDGPVINSRAGLYVFINAMLVGRPLVDDGMLINYLANRYGGHYEALVEEILTASFDVLSNGMYRNESSRMMFVFRSFLVNKLPPFFAAMLASTMVSIPMEMCISHALSRLDPNTFPSFSQMFEMQGNTVLSDVRQEFLFACASHKLIPESSIERLLGENPMQTLPVGYNKDELVSQINANPERAEQLINEIESMEGNAGAIIGAITEVMHNLCNQKETMTLKNICNSLSRRPQALDVVLIFRNPKQVLQPLCALLDSWHWDEDQGEYQPVYDEFGSILLLVLAFKYRFDLRPADLGISSSDSFVLRLLERGSCSQKLDALDEKQNKNLGSWIAALFIAEGISEETMSACSPQEFYLLVATLFSQSLEACETGKLEFDTLKGGFEYLLEPFLLPSLIFALTWLGDHIWEMELDPSIPLKVLHSLVNPSSISGEAREIHRTVLNIAARTLEEQLKDVRTRHPSRTDIKPILDSLEPCLSFQLVGSSHRSELEGWTTHSSGGLLGSIRSTFQSLVLWSTNPEVSMAPPPYTHRQLIAGVRMLGASRVLPALIEELKLQTEAGNGPLALDLAATLICAPMAETFSVEQNSHQPVDPNKEALPRCGILTLRDVLALQHENVPKISEKDPLRAEVLVRLYRRVNALLAPPSQVPNLDVNNIIQNMQLGGVGVGAGQMELDATGAADHGVGPDDAENIHRMIDNAAAAAGLDSSGTGLDTSIDDVLNAADMAVGNPEFLDLDMEGMF</sequence>
<dbReference type="EMBL" id="AAHF01000005">
    <property type="protein sequence ID" value="EAL90128.2"/>
    <property type="molecule type" value="Genomic_DNA"/>
</dbReference>
<dbReference type="RefSeq" id="XP_752166.2">
    <property type="nucleotide sequence ID" value="XM_747073.2"/>
</dbReference>
<dbReference type="STRING" id="330879.Q4WNQ6"/>
<dbReference type="EnsemblFungi" id="EAL90128">
    <property type="protein sequence ID" value="EAL90128"/>
    <property type="gene ID" value="AFUA_4G06600"/>
</dbReference>
<dbReference type="GeneID" id="3509258"/>
<dbReference type="KEGG" id="afm:AFUA_4G06600"/>
<dbReference type="VEuPathDB" id="FungiDB:Afu4g06600"/>
<dbReference type="eggNOG" id="ENOG502R1HB">
    <property type="taxonomic scope" value="Eukaryota"/>
</dbReference>
<dbReference type="HOGENOM" id="CLU_004096_0_0_1"/>
<dbReference type="InParanoid" id="Q4WNQ6"/>
<dbReference type="OMA" id="LYVYINA"/>
<dbReference type="OrthoDB" id="5322661at2759"/>
<dbReference type="Proteomes" id="UP000002530">
    <property type="component" value="Chromosome 4"/>
</dbReference>
<dbReference type="GO" id="GO:0016592">
    <property type="term" value="C:mediator complex"/>
    <property type="evidence" value="ECO:0000318"/>
    <property type="project" value="GO_Central"/>
</dbReference>
<dbReference type="GO" id="GO:0003712">
    <property type="term" value="F:transcription coregulator activity"/>
    <property type="evidence" value="ECO:0007669"/>
    <property type="project" value="InterPro"/>
</dbReference>
<dbReference type="GO" id="GO:0006357">
    <property type="term" value="P:regulation of transcription by RNA polymerase II"/>
    <property type="evidence" value="ECO:0000318"/>
    <property type="project" value="GO_Central"/>
</dbReference>
<dbReference type="InterPro" id="IPR014801">
    <property type="entry name" value="Mediator_Med5_fun"/>
</dbReference>
<dbReference type="PANTHER" id="PTHR35784">
    <property type="entry name" value="MEDIATOR OF RNA POLYMERASE II TRANSCRIPTION SUBUNIT 5"/>
    <property type="match status" value="1"/>
</dbReference>
<dbReference type="PANTHER" id="PTHR35784:SF1">
    <property type="entry name" value="MEDIATOR OF RNA POLYMERASE II TRANSCRIPTION SUBUNIT 5"/>
    <property type="match status" value="1"/>
</dbReference>
<dbReference type="Pfam" id="PF08689">
    <property type="entry name" value="Med5"/>
    <property type="match status" value="1"/>
</dbReference>
<keyword id="KW-0010">Activator</keyword>
<keyword id="KW-0539">Nucleus</keyword>
<keyword id="KW-1185">Reference proteome</keyword>
<keyword id="KW-0804">Transcription</keyword>
<keyword id="KW-0805">Transcription regulation</keyword>
<comment type="function">
    <text evidence="1">Component of the Mediator complex, a coactivator involved in the regulated transcription of nearly all RNA polymerase II-dependent genes. Mediator functions as a bridge to convey information from gene-specific regulatory proteins to the basal RNA polymerase II transcription machinery. Mediator is recruited to promoters by direct interactions with regulatory proteins and serves as a scaffold for the assembly of a functional preinitiation complex with RNA polymerase II and the general transcription factors (By similarity).</text>
</comment>
<comment type="subunit">
    <text evidence="1">Component of the Mediator complex.</text>
</comment>
<comment type="subcellular location">
    <subcellularLocation>
        <location evidence="1">Nucleus</location>
    </subcellularLocation>
</comment>
<comment type="similarity">
    <text evidence="2">Belongs to the Mediator complex subunit 5 family.</text>
</comment>
<feature type="chain" id="PRO_0000302768" description="Mediator of RNA polymerase II transcription subunit 5">
    <location>
        <begin position="1"/>
        <end position="1007"/>
    </location>
</feature>
<accession>Q4WNQ6</accession>
<gene>
    <name type="primary">nut1</name>
    <name type="synonym">med5</name>
    <name type="ORF">AFUA_4G06600</name>
</gene>
<protein>
    <recommendedName>
        <fullName>Mediator of RNA polymerase II transcription subunit 5</fullName>
    </recommendedName>
    <alternativeName>
        <fullName>Mediator complex subunit 5</fullName>
    </alternativeName>
</protein>
<name>MED5_ASPFU</name>
<proteinExistence type="inferred from homology"/>
<reference key="1">
    <citation type="journal article" date="2005" name="Nature">
        <title>Genomic sequence of the pathogenic and allergenic filamentous fungus Aspergillus fumigatus.</title>
        <authorList>
            <person name="Nierman W.C."/>
            <person name="Pain A."/>
            <person name="Anderson M.J."/>
            <person name="Wortman J.R."/>
            <person name="Kim H.S."/>
            <person name="Arroyo J."/>
            <person name="Berriman M."/>
            <person name="Abe K."/>
            <person name="Archer D.B."/>
            <person name="Bermejo C."/>
            <person name="Bennett J.W."/>
            <person name="Bowyer P."/>
            <person name="Chen D."/>
            <person name="Collins M."/>
            <person name="Coulsen R."/>
            <person name="Davies R."/>
            <person name="Dyer P.S."/>
            <person name="Farman M.L."/>
            <person name="Fedorova N."/>
            <person name="Fedorova N.D."/>
            <person name="Feldblyum T.V."/>
            <person name="Fischer R."/>
            <person name="Fosker N."/>
            <person name="Fraser A."/>
            <person name="Garcia J.L."/>
            <person name="Garcia M.J."/>
            <person name="Goble A."/>
            <person name="Goldman G.H."/>
            <person name="Gomi K."/>
            <person name="Griffith-Jones S."/>
            <person name="Gwilliam R."/>
            <person name="Haas B.J."/>
            <person name="Haas H."/>
            <person name="Harris D.E."/>
            <person name="Horiuchi H."/>
            <person name="Huang J."/>
            <person name="Humphray S."/>
            <person name="Jimenez J."/>
            <person name="Keller N."/>
            <person name="Khouri H."/>
            <person name="Kitamoto K."/>
            <person name="Kobayashi T."/>
            <person name="Konzack S."/>
            <person name="Kulkarni R."/>
            <person name="Kumagai T."/>
            <person name="Lafton A."/>
            <person name="Latge J.-P."/>
            <person name="Li W."/>
            <person name="Lord A."/>
            <person name="Lu C."/>
            <person name="Majoros W.H."/>
            <person name="May G.S."/>
            <person name="Miller B.L."/>
            <person name="Mohamoud Y."/>
            <person name="Molina M."/>
            <person name="Monod M."/>
            <person name="Mouyna I."/>
            <person name="Mulligan S."/>
            <person name="Murphy L.D."/>
            <person name="O'Neil S."/>
            <person name="Paulsen I."/>
            <person name="Penalva M.A."/>
            <person name="Pertea M."/>
            <person name="Price C."/>
            <person name="Pritchard B.L."/>
            <person name="Quail M.A."/>
            <person name="Rabbinowitsch E."/>
            <person name="Rawlins N."/>
            <person name="Rajandream M.A."/>
            <person name="Reichard U."/>
            <person name="Renauld H."/>
            <person name="Robson G.D."/>
            <person name="Rodriguez de Cordoba S."/>
            <person name="Rodriguez-Pena J.M."/>
            <person name="Ronning C.M."/>
            <person name="Rutter S."/>
            <person name="Salzberg S.L."/>
            <person name="Sanchez M."/>
            <person name="Sanchez-Ferrero J.C."/>
            <person name="Saunders D."/>
            <person name="Seeger K."/>
            <person name="Squares R."/>
            <person name="Squares S."/>
            <person name="Takeuchi M."/>
            <person name="Tekaia F."/>
            <person name="Turner G."/>
            <person name="Vazquez de Aldana C.R."/>
            <person name="Weidman J."/>
            <person name="White O."/>
            <person name="Woodward J.R."/>
            <person name="Yu J.-H."/>
            <person name="Fraser C.M."/>
            <person name="Galagan J.E."/>
            <person name="Asai K."/>
            <person name="Machida M."/>
            <person name="Hall N."/>
            <person name="Barrell B.G."/>
            <person name="Denning D.W."/>
        </authorList>
    </citation>
    <scope>NUCLEOTIDE SEQUENCE [LARGE SCALE GENOMIC DNA]</scope>
    <source>
        <strain>ATCC MYA-4609 / CBS 101355 / FGSC A1100 / Af293</strain>
    </source>
</reference>
<evidence type="ECO:0000250" key="1"/>
<evidence type="ECO:0000305" key="2"/>